<organism>
    <name type="scientific">Arabidopsis thaliana</name>
    <name type="common">Mouse-ear cress</name>
    <dbReference type="NCBI Taxonomy" id="3702"/>
    <lineage>
        <taxon>Eukaryota</taxon>
        <taxon>Viridiplantae</taxon>
        <taxon>Streptophyta</taxon>
        <taxon>Embryophyta</taxon>
        <taxon>Tracheophyta</taxon>
        <taxon>Spermatophyta</taxon>
        <taxon>Magnoliopsida</taxon>
        <taxon>eudicotyledons</taxon>
        <taxon>Gunneridae</taxon>
        <taxon>Pentapetalae</taxon>
        <taxon>rosids</taxon>
        <taxon>malvids</taxon>
        <taxon>Brassicales</taxon>
        <taxon>Brassicaceae</taxon>
        <taxon>Camelineae</taxon>
        <taxon>Arabidopsis</taxon>
    </lineage>
</organism>
<feature type="chain" id="PRO_0000196785" description="Uncharacterized ribosomal S3-like protein AtMg00690, mitochondrial">
    <location>
        <begin position="1"/>
        <end position="240"/>
    </location>
</feature>
<feature type="transmembrane region" description="Helical" evidence="1">
    <location>
        <begin position="73"/>
        <end position="93"/>
    </location>
</feature>
<comment type="subcellular location">
    <subcellularLocation>
        <location evidence="4">Mitochondrion membrane</location>
        <topology evidence="4">Single-pass membrane protein</topology>
    </subcellularLocation>
</comment>
<comment type="RNA editing">
    <location>
        <position position="67" evidence="2 3"/>
    </location>
</comment>
<comment type="similarity">
    <text evidence="4">Belongs to the universal ribosomal protein uS3 family.</text>
</comment>
<name>M690_ARATH</name>
<proteinExistence type="evidence at transcript level"/>
<dbReference type="EMBL" id="Y08501">
    <property type="protein sequence ID" value="CAA69844.1"/>
    <property type="status" value="ALT_SEQ"/>
    <property type="molecule type" value="Genomic_DNA"/>
</dbReference>
<dbReference type="EMBL" id="BK010421">
    <property type="status" value="NOT_ANNOTATED_CDS"/>
    <property type="molecule type" value="Genomic_DNA"/>
</dbReference>
<dbReference type="EMBL" id="EF488932">
    <property type="protein sequence ID" value="ABS50644.1"/>
    <property type="molecule type" value="mRNA"/>
</dbReference>
<dbReference type="EMBL" id="EF488933">
    <property type="protein sequence ID" value="ABS50645.1"/>
    <property type="molecule type" value="mRNA"/>
</dbReference>
<dbReference type="RefSeq" id="NP_085529.1">
    <property type="nucleotide sequence ID" value="NC_001284.2"/>
</dbReference>
<dbReference type="SMR" id="P92511"/>
<dbReference type="STRING" id="3702.P92511"/>
<dbReference type="PaxDb" id="3702-ATMG00690.1"/>
<dbReference type="Araport" id="ATMG00690"/>
<dbReference type="TAIR" id="ATMG00690">
    <property type="gene designation" value="ORF240A"/>
</dbReference>
<dbReference type="InParanoid" id="P92511"/>
<dbReference type="PRO" id="PR:P92511"/>
<dbReference type="Proteomes" id="UP000006548">
    <property type="component" value="Mitochondrion MT"/>
</dbReference>
<dbReference type="ExpressionAtlas" id="P92511">
    <property type="expression patterns" value="baseline and differential"/>
</dbReference>
<dbReference type="GO" id="GO:0031966">
    <property type="term" value="C:mitochondrial membrane"/>
    <property type="evidence" value="ECO:0007669"/>
    <property type="project" value="UniProtKB-SubCell"/>
</dbReference>
<dbReference type="InterPro" id="IPR052694">
    <property type="entry name" value="Mt_uS3-like"/>
</dbReference>
<dbReference type="PANTHER" id="PTHR35289:SF1">
    <property type="entry name" value="ATP SYNTHASE 9 MITOCHONDRIAL-RELATED"/>
    <property type="match status" value="1"/>
</dbReference>
<dbReference type="PANTHER" id="PTHR35289">
    <property type="entry name" value="TRANSMEMBRANE PROTEIN"/>
    <property type="match status" value="1"/>
</dbReference>
<protein>
    <recommendedName>
        <fullName>Uncharacterized ribosomal S3-like protein AtMg00690, mitochondrial</fullName>
    </recommendedName>
    <alternativeName>
        <fullName>ORF240a</fullName>
    </alternativeName>
</protein>
<geneLocation type="mitochondrion"/>
<gene>
    <name type="ordered locus">AtMg00690</name>
</gene>
<sequence>MRSSVLRSLRGRLVINLESTRKLRLSRTNIVPGRKKGQKSIKSKNMARKGNPILVRLGKNRSSDSSWFSAEALLGCLYFFIYFVAPTLGPVLFLLRLIHFVWGLRLGLGNENFHFGVGPDGGATGLDLNQPPQEQQPTLGVNRAALDLNELPPVHLLYAEVEGPQSTKAQNDVMLAHLNQVQNLTRDLQTEPNIWRRQALIDILDWEVRSLQRHFRIFRQRDRLREVQRSWLREQLNRYR</sequence>
<evidence type="ECO:0000255" key="1"/>
<evidence type="ECO:0000269" key="2">
    <source>
    </source>
</evidence>
<evidence type="ECO:0000269" key="3">
    <source>
    </source>
</evidence>
<evidence type="ECO:0000305" key="4"/>
<reference key="1">
    <citation type="journal article" date="1997" name="Nat. Genet.">
        <title>The mitochondrial genome of Arabidopsis thaliana contains 57 genes in 366,924 nucleotides.</title>
        <authorList>
            <person name="Unseld M."/>
            <person name="Marienfeld J.R."/>
            <person name="Brandt P."/>
            <person name="Brennicke A."/>
        </authorList>
    </citation>
    <scope>NUCLEOTIDE SEQUENCE [LARGE SCALE GENOMIC DNA]</scope>
    <source>
        <strain>cv. C24</strain>
    </source>
</reference>
<reference key="2">
    <citation type="journal article" date="2018" name="Plant Cell">
        <title>Correction of persistent errors in Arabidopsis reference mitochondrial genomes.</title>
        <authorList>
            <person name="Sloan D.B."/>
            <person name="Wu Z."/>
            <person name="Sharbrough J."/>
        </authorList>
    </citation>
    <scope>NUCLEOTIDE SEQUENCE [LARGE SCALE GENOMIC DNA]</scope>
    <source>
        <strain>cv. Columbia</strain>
    </source>
</reference>
<reference key="3">
    <citation type="journal article" date="2008" name="Genetics">
        <title>Genetic architecture of mitochondrial editing in Arabidopsis thaliana.</title>
        <authorList>
            <person name="Bentolila S."/>
            <person name="Elliott L.E."/>
            <person name="Hanson M.R."/>
        </authorList>
    </citation>
    <scope>NUCLEOTIDE SEQUENCE [MRNA] OF 29-214</scope>
    <scope>RNA EDITING</scope>
    <source>
        <strain>cv. Columbia</strain>
        <strain>cv. Landsberg erecta</strain>
        <tissue>Rosette leaf</tissue>
    </source>
</reference>
<reference key="4">
    <citation type="journal article" date="1999" name="Proc. Natl. Acad. Sci. U.S.A.">
        <title>RNA editing in Arabidopsis mitochondria effects 441 C to U changes in ORFs.</title>
        <authorList>
            <person name="Giege P."/>
            <person name="Brennicke A."/>
        </authorList>
    </citation>
    <scope>RNA EDITING</scope>
</reference>
<keyword id="KW-0472">Membrane</keyword>
<keyword id="KW-0496">Mitochondrion</keyword>
<keyword id="KW-1185">Reference proteome</keyword>
<keyword id="KW-0691">RNA editing</keyword>
<keyword id="KW-0812">Transmembrane</keyword>
<keyword id="KW-1133">Transmembrane helix</keyword>
<accession>P92511</accession>
<accession>A7KNI9</accession>
<accession>Q1ZY01</accession>